<dbReference type="EC" id="2.8.1.-" evidence="1"/>
<dbReference type="EMBL" id="AE008917">
    <property type="protein sequence ID" value="AAL52313.1"/>
    <property type="molecule type" value="Genomic_DNA"/>
</dbReference>
<dbReference type="PIR" id="AF3393">
    <property type="entry name" value="AF3393"/>
</dbReference>
<dbReference type="RefSeq" id="WP_004686800.1">
    <property type="nucleotide sequence ID" value="NC_003317.1"/>
</dbReference>
<dbReference type="SMR" id="Q8YGM6"/>
<dbReference type="GeneID" id="29593974"/>
<dbReference type="KEGG" id="bme:BMEI1132"/>
<dbReference type="KEGG" id="bmel:DK63_281"/>
<dbReference type="PATRIC" id="fig|224914.52.peg.290"/>
<dbReference type="eggNOG" id="COG0037">
    <property type="taxonomic scope" value="Bacteria"/>
</dbReference>
<dbReference type="PhylomeDB" id="Q8YGM6"/>
<dbReference type="Proteomes" id="UP000000419">
    <property type="component" value="Chromosome I"/>
</dbReference>
<dbReference type="GO" id="GO:0005737">
    <property type="term" value="C:cytoplasm"/>
    <property type="evidence" value="ECO:0007669"/>
    <property type="project" value="UniProtKB-SubCell"/>
</dbReference>
<dbReference type="GO" id="GO:0051539">
    <property type="term" value="F:4 iron, 4 sulfur cluster binding"/>
    <property type="evidence" value="ECO:0007669"/>
    <property type="project" value="UniProtKB-UniRule"/>
</dbReference>
<dbReference type="GO" id="GO:0005524">
    <property type="term" value="F:ATP binding"/>
    <property type="evidence" value="ECO:0007669"/>
    <property type="project" value="UniProtKB-UniRule"/>
</dbReference>
<dbReference type="GO" id="GO:0000287">
    <property type="term" value="F:magnesium ion binding"/>
    <property type="evidence" value="ECO:0007669"/>
    <property type="project" value="UniProtKB-UniRule"/>
</dbReference>
<dbReference type="GO" id="GO:0016783">
    <property type="term" value="F:sulfurtransferase activity"/>
    <property type="evidence" value="ECO:0007669"/>
    <property type="project" value="UniProtKB-UniRule"/>
</dbReference>
<dbReference type="GO" id="GO:0000049">
    <property type="term" value="F:tRNA binding"/>
    <property type="evidence" value="ECO:0007669"/>
    <property type="project" value="UniProtKB-KW"/>
</dbReference>
<dbReference type="GO" id="GO:0034227">
    <property type="term" value="P:tRNA thio-modification"/>
    <property type="evidence" value="ECO:0007669"/>
    <property type="project" value="UniProtKB-UniRule"/>
</dbReference>
<dbReference type="CDD" id="cd24138">
    <property type="entry name" value="TtcA-like"/>
    <property type="match status" value="1"/>
</dbReference>
<dbReference type="Gene3D" id="3.40.50.620">
    <property type="entry name" value="HUPs"/>
    <property type="match status" value="1"/>
</dbReference>
<dbReference type="HAMAP" id="MF_01850">
    <property type="entry name" value="TtcA"/>
    <property type="match status" value="1"/>
</dbReference>
<dbReference type="InterPro" id="IPR014729">
    <property type="entry name" value="Rossmann-like_a/b/a_fold"/>
</dbReference>
<dbReference type="InterPro" id="IPR011063">
    <property type="entry name" value="TilS/TtcA_N"/>
</dbReference>
<dbReference type="InterPro" id="IPR012089">
    <property type="entry name" value="tRNA_Cyd_32_2_STrfase"/>
</dbReference>
<dbReference type="InterPro" id="IPR035107">
    <property type="entry name" value="tRNA_thiolation_TtcA_Ctu1"/>
</dbReference>
<dbReference type="NCBIfam" id="NF007972">
    <property type="entry name" value="PRK10696.1"/>
    <property type="match status" value="1"/>
</dbReference>
<dbReference type="PANTHER" id="PTHR43686:SF1">
    <property type="entry name" value="AMINOTRAN_5 DOMAIN-CONTAINING PROTEIN"/>
    <property type="match status" value="1"/>
</dbReference>
<dbReference type="PANTHER" id="PTHR43686">
    <property type="entry name" value="SULFURTRANSFERASE-RELATED"/>
    <property type="match status" value="1"/>
</dbReference>
<dbReference type="Pfam" id="PF01171">
    <property type="entry name" value="ATP_bind_3"/>
    <property type="match status" value="1"/>
</dbReference>
<dbReference type="PIRSF" id="PIRSF004976">
    <property type="entry name" value="ATPase_YdaO"/>
    <property type="match status" value="1"/>
</dbReference>
<dbReference type="SUPFAM" id="SSF52402">
    <property type="entry name" value="Adenine nucleotide alpha hydrolases-like"/>
    <property type="match status" value="1"/>
</dbReference>
<name>TTCA_BRUME</name>
<reference key="1">
    <citation type="journal article" date="2002" name="Proc. Natl. Acad. Sci. U.S.A.">
        <title>The genome sequence of the facultative intracellular pathogen Brucella melitensis.</title>
        <authorList>
            <person name="DelVecchio V.G."/>
            <person name="Kapatral V."/>
            <person name="Redkar R.J."/>
            <person name="Patra G."/>
            <person name="Mujer C."/>
            <person name="Los T."/>
            <person name="Ivanova N."/>
            <person name="Anderson I."/>
            <person name="Bhattacharyya A."/>
            <person name="Lykidis A."/>
            <person name="Reznik G."/>
            <person name="Jablonski L."/>
            <person name="Larsen N."/>
            <person name="D'Souza M."/>
            <person name="Bernal A."/>
            <person name="Mazur M."/>
            <person name="Goltsman E."/>
            <person name="Selkov E."/>
            <person name="Elzer P.H."/>
            <person name="Hagius S."/>
            <person name="O'Callaghan D."/>
            <person name="Letesson J.-J."/>
            <person name="Haselkorn R."/>
            <person name="Kyrpides N.C."/>
            <person name="Overbeek R."/>
        </authorList>
    </citation>
    <scope>NUCLEOTIDE SEQUENCE [LARGE SCALE GENOMIC DNA]</scope>
    <source>
        <strain>ATCC 23456 / CCUG 17765 / NCTC 10094 / 16M</strain>
    </source>
</reference>
<evidence type="ECO:0000255" key="1">
    <source>
        <dbReference type="HAMAP-Rule" id="MF_01850"/>
    </source>
</evidence>
<sequence>MNAFDADITEHADSSGCHPLFRDVPATVEFNKLRKRLVRLTRQAIEDFAMVKPGDRWMVCLSGGKDSYGLLALLLDLKWRGLLPVELLAVNLDQGQPNFPKHILPDFLTRYGIEHRIEYQDTYSIVTDKLPETSTYCSLCSRLRRGNLYRIAREEGCSAIVLGHHREDILETFFMNLFHGGRLAAMPPKLLNDEGDLMVFRPLAYAAEDDLEKFANAMQFPIIPCDLCGSQDGLQRNAMKAMLIDIEKRMPGRKDTMIRALTNVRPSHLLDRKLFDFAGLMANGEKGSDDALW</sequence>
<protein>
    <recommendedName>
        <fullName evidence="1">tRNA-cytidine(32) 2-sulfurtransferase</fullName>
        <ecNumber evidence="1">2.8.1.-</ecNumber>
    </recommendedName>
    <alternativeName>
        <fullName evidence="1">Two-thiocytidine biosynthesis protein A</fullName>
    </alternativeName>
    <alternativeName>
        <fullName evidence="1">tRNA 2-thiocytidine biosynthesis protein TtcA</fullName>
    </alternativeName>
</protein>
<keyword id="KW-0004">4Fe-4S</keyword>
<keyword id="KW-0067">ATP-binding</keyword>
<keyword id="KW-0963">Cytoplasm</keyword>
<keyword id="KW-0408">Iron</keyword>
<keyword id="KW-0411">Iron-sulfur</keyword>
<keyword id="KW-0460">Magnesium</keyword>
<keyword id="KW-0479">Metal-binding</keyword>
<keyword id="KW-0547">Nucleotide-binding</keyword>
<keyword id="KW-0694">RNA-binding</keyword>
<keyword id="KW-0808">Transferase</keyword>
<keyword id="KW-0819">tRNA processing</keyword>
<keyword id="KW-0820">tRNA-binding</keyword>
<comment type="function">
    <text evidence="1">Catalyzes the ATP-dependent 2-thiolation of cytidine in position 32 of tRNA, to form 2-thiocytidine (s(2)C32). The sulfur atoms are provided by the cysteine/cysteine desulfurase (IscS) system.</text>
</comment>
<comment type="catalytic activity">
    <reaction evidence="1">
        <text>cytidine(32) in tRNA + S-sulfanyl-L-cysteinyl-[cysteine desulfurase] + AH2 + ATP = 2-thiocytidine(32) in tRNA + L-cysteinyl-[cysteine desulfurase] + A + AMP + diphosphate + H(+)</text>
        <dbReference type="Rhea" id="RHEA:57048"/>
        <dbReference type="Rhea" id="RHEA-COMP:10288"/>
        <dbReference type="Rhea" id="RHEA-COMP:12157"/>
        <dbReference type="Rhea" id="RHEA-COMP:12158"/>
        <dbReference type="Rhea" id="RHEA-COMP:14821"/>
        <dbReference type="ChEBI" id="CHEBI:13193"/>
        <dbReference type="ChEBI" id="CHEBI:15378"/>
        <dbReference type="ChEBI" id="CHEBI:17499"/>
        <dbReference type="ChEBI" id="CHEBI:29950"/>
        <dbReference type="ChEBI" id="CHEBI:30616"/>
        <dbReference type="ChEBI" id="CHEBI:33019"/>
        <dbReference type="ChEBI" id="CHEBI:61963"/>
        <dbReference type="ChEBI" id="CHEBI:82748"/>
        <dbReference type="ChEBI" id="CHEBI:141453"/>
        <dbReference type="ChEBI" id="CHEBI:456215"/>
    </reaction>
    <physiologicalReaction direction="left-to-right" evidence="1">
        <dbReference type="Rhea" id="RHEA:57049"/>
    </physiologicalReaction>
</comment>
<comment type="cofactor">
    <cofactor evidence="1">
        <name>Mg(2+)</name>
        <dbReference type="ChEBI" id="CHEBI:18420"/>
    </cofactor>
</comment>
<comment type="cofactor">
    <cofactor evidence="1">
        <name>[4Fe-4S] cluster</name>
        <dbReference type="ChEBI" id="CHEBI:49883"/>
    </cofactor>
    <text evidence="1">Binds 1 [4Fe-4S] cluster per subunit. The cluster is chelated by three Cys residues, the fourth Fe has a free coordination site that may bind a sulfur atom transferred from the persulfide of IscS.</text>
</comment>
<comment type="pathway">
    <text evidence="1">tRNA modification.</text>
</comment>
<comment type="subunit">
    <text evidence="1">Homodimer.</text>
</comment>
<comment type="subcellular location">
    <subcellularLocation>
        <location evidence="1">Cytoplasm</location>
    </subcellularLocation>
</comment>
<comment type="miscellaneous">
    <text evidence="1">The thiolation reaction likely consists of two steps: a first activation step by ATP to form an adenylated intermediate of the target base of tRNA, and a second nucleophilic substitution step of the sulfur (S) atom supplied by the hydrosulfide attached to the Fe-S cluster.</text>
</comment>
<comment type="similarity">
    <text evidence="1">Belongs to the TtcA family.</text>
</comment>
<gene>
    <name evidence="1" type="primary">ttcA</name>
    <name type="ordered locus">BMEI1132</name>
</gene>
<organism>
    <name type="scientific">Brucella melitensis biotype 1 (strain ATCC 23456 / CCUG 17765 / NCTC 10094 / 16M)</name>
    <dbReference type="NCBI Taxonomy" id="224914"/>
    <lineage>
        <taxon>Bacteria</taxon>
        <taxon>Pseudomonadati</taxon>
        <taxon>Pseudomonadota</taxon>
        <taxon>Alphaproteobacteria</taxon>
        <taxon>Hyphomicrobiales</taxon>
        <taxon>Brucellaceae</taxon>
        <taxon>Brucella/Ochrobactrum group</taxon>
        <taxon>Brucella</taxon>
    </lineage>
</organism>
<accession>Q8YGM6</accession>
<proteinExistence type="inferred from homology"/>
<feature type="chain" id="PRO_0000348675" description="tRNA-cytidine(32) 2-sulfurtransferase">
    <location>
        <begin position="1"/>
        <end position="293"/>
    </location>
</feature>
<feature type="short sequence motif" description="PP-loop motif" evidence="1">
    <location>
        <begin position="62"/>
        <end position="67"/>
    </location>
</feature>
<feature type="binding site" evidence="1">
    <location>
        <position position="137"/>
    </location>
    <ligand>
        <name>[4Fe-4S] cluster</name>
        <dbReference type="ChEBI" id="CHEBI:49883"/>
    </ligand>
</feature>
<feature type="binding site" evidence="1">
    <location>
        <position position="140"/>
    </location>
    <ligand>
        <name>[4Fe-4S] cluster</name>
        <dbReference type="ChEBI" id="CHEBI:49883"/>
    </ligand>
</feature>
<feature type="binding site" evidence="1">
    <location>
        <position position="228"/>
    </location>
    <ligand>
        <name>[4Fe-4S] cluster</name>
        <dbReference type="ChEBI" id="CHEBI:49883"/>
    </ligand>
</feature>